<comment type="function">
    <text evidence="1">Involved in phosphonate degradation.</text>
</comment>
<comment type="catalytic activity">
    <reaction evidence="1">
        <text>phosphonoacetaldehyde + H2O = acetaldehyde + phosphate + H(+)</text>
        <dbReference type="Rhea" id="RHEA:18905"/>
        <dbReference type="ChEBI" id="CHEBI:15343"/>
        <dbReference type="ChEBI" id="CHEBI:15377"/>
        <dbReference type="ChEBI" id="CHEBI:15378"/>
        <dbReference type="ChEBI" id="CHEBI:43474"/>
        <dbReference type="ChEBI" id="CHEBI:58383"/>
        <dbReference type="EC" id="3.11.1.1"/>
    </reaction>
</comment>
<comment type="cofactor">
    <cofactor evidence="1">
        <name>Mg(2+)</name>
        <dbReference type="ChEBI" id="CHEBI:18420"/>
    </cofactor>
    <text evidence="1">Binds 1 Mg(2+) ion per subunit.</text>
</comment>
<comment type="subunit">
    <text evidence="1">Homodimer.</text>
</comment>
<comment type="similarity">
    <text evidence="1">Belongs to the HAD-like hydrolase superfamily. PhnX family.</text>
</comment>
<name>PHNX_LYSSC</name>
<proteinExistence type="inferred from homology"/>
<accession>B1HPR7</accession>
<gene>
    <name evidence="1" type="primary">phnX</name>
    <name type="ordered locus">Bsph_1361</name>
</gene>
<evidence type="ECO:0000255" key="1">
    <source>
        <dbReference type="HAMAP-Rule" id="MF_01375"/>
    </source>
</evidence>
<dbReference type="EC" id="3.11.1.1" evidence="1"/>
<dbReference type="EMBL" id="CP000817">
    <property type="protein sequence ID" value="ACA38969.1"/>
    <property type="molecule type" value="Genomic_DNA"/>
</dbReference>
<dbReference type="SMR" id="B1HPR7"/>
<dbReference type="EnsemblBacteria" id="ACA38969">
    <property type="protein sequence ID" value="ACA38969"/>
    <property type="gene ID" value="Bsph_1361"/>
</dbReference>
<dbReference type="KEGG" id="lsp:Bsph_1361"/>
<dbReference type="HOGENOM" id="CLU_045011_12_0_9"/>
<dbReference type="Proteomes" id="UP000002164">
    <property type="component" value="Chromosome"/>
</dbReference>
<dbReference type="GO" id="GO:0005829">
    <property type="term" value="C:cytosol"/>
    <property type="evidence" value="ECO:0007669"/>
    <property type="project" value="TreeGrafter"/>
</dbReference>
<dbReference type="GO" id="GO:0000287">
    <property type="term" value="F:magnesium ion binding"/>
    <property type="evidence" value="ECO:0007669"/>
    <property type="project" value="UniProtKB-UniRule"/>
</dbReference>
<dbReference type="GO" id="GO:0008967">
    <property type="term" value="F:phosphoglycolate phosphatase activity"/>
    <property type="evidence" value="ECO:0007669"/>
    <property type="project" value="TreeGrafter"/>
</dbReference>
<dbReference type="GO" id="GO:0050194">
    <property type="term" value="F:phosphonoacetaldehyde hydrolase activity"/>
    <property type="evidence" value="ECO:0007669"/>
    <property type="project" value="UniProtKB-UniRule"/>
</dbReference>
<dbReference type="GO" id="GO:0006281">
    <property type="term" value="P:DNA repair"/>
    <property type="evidence" value="ECO:0007669"/>
    <property type="project" value="TreeGrafter"/>
</dbReference>
<dbReference type="GO" id="GO:0019700">
    <property type="term" value="P:organic phosphonate catabolic process"/>
    <property type="evidence" value="ECO:0007669"/>
    <property type="project" value="InterPro"/>
</dbReference>
<dbReference type="CDD" id="cd02586">
    <property type="entry name" value="HAD_PHN"/>
    <property type="match status" value="1"/>
</dbReference>
<dbReference type="Gene3D" id="3.40.50.1000">
    <property type="entry name" value="HAD superfamily/HAD-like"/>
    <property type="match status" value="1"/>
</dbReference>
<dbReference type="Gene3D" id="1.10.150.240">
    <property type="entry name" value="Putative phosphatase, domain 2"/>
    <property type="match status" value="1"/>
</dbReference>
<dbReference type="HAMAP" id="MF_01375">
    <property type="entry name" value="PhnX"/>
    <property type="match status" value="1"/>
</dbReference>
<dbReference type="InterPro" id="IPR050155">
    <property type="entry name" value="HAD-like_hydrolase_sf"/>
</dbReference>
<dbReference type="InterPro" id="IPR036412">
    <property type="entry name" value="HAD-like_sf"/>
</dbReference>
<dbReference type="InterPro" id="IPR041492">
    <property type="entry name" value="HAD_2"/>
</dbReference>
<dbReference type="InterPro" id="IPR023214">
    <property type="entry name" value="HAD_sf"/>
</dbReference>
<dbReference type="InterPro" id="IPR023198">
    <property type="entry name" value="PGP-like_dom2"/>
</dbReference>
<dbReference type="InterPro" id="IPR006323">
    <property type="entry name" value="Phosphonoacetald_hydro"/>
</dbReference>
<dbReference type="NCBIfam" id="TIGR01422">
    <property type="entry name" value="phosphonatase"/>
    <property type="match status" value="1"/>
</dbReference>
<dbReference type="PANTHER" id="PTHR43434">
    <property type="entry name" value="PHOSPHOGLYCOLATE PHOSPHATASE"/>
    <property type="match status" value="1"/>
</dbReference>
<dbReference type="PANTHER" id="PTHR43434:SF19">
    <property type="entry name" value="PHOSPHONOACETALDEHYDE HYDROLASE"/>
    <property type="match status" value="1"/>
</dbReference>
<dbReference type="Pfam" id="PF13419">
    <property type="entry name" value="HAD_2"/>
    <property type="match status" value="1"/>
</dbReference>
<dbReference type="SFLD" id="SFLDG01129">
    <property type="entry name" value="C1.5:_HAD__Beta-PGM__Phosphata"/>
    <property type="match status" value="1"/>
</dbReference>
<dbReference type="SFLD" id="SFLDS00003">
    <property type="entry name" value="Haloacid_Dehalogenase"/>
    <property type="match status" value="1"/>
</dbReference>
<dbReference type="SUPFAM" id="SSF56784">
    <property type="entry name" value="HAD-like"/>
    <property type="match status" value="1"/>
</dbReference>
<organism>
    <name type="scientific">Lysinibacillus sphaericus (strain C3-41)</name>
    <dbReference type="NCBI Taxonomy" id="444177"/>
    <lineage>
        <taxon>Bacteria</taxon>
        <taxon>Bacillati</taxon>
        <taxon>Bacillota</taxon>
        <taxon>Bacilli</taxon>
        <taxon>Bacillales</taxon>
        <taxon>Bacillaceae</taxon>
        <taxon>Lysinibacillus</taxon>
    </lineage>
</organism>
<sequence>MKIETVILDWAGTAVDFGCFAPVNVFLTIFEDAGVTVTLEEARKPMGMLKIDHIRTMLEMPRINEEWKRVHRQHFTEEDVHLLYNQFESKLMESLATYTDPIQHVTATVQQLREAGIRFGSTTGYTDFMMEVVTKQAATKGYQPDFLVTPTQVSDKGRPYPYMIFRNMEALGAKSTKQVVKVGDTTSDIKEALNAGVWAVGVIIGSSEMGLSEEEFLALTAEEQQQAIEKTKRIFEMTGAHYTIETMKDLPILINTINEELANETNDRN</sequence>
<feature type="chain" id="PRO_1000144833" description="Phosphonoacetaldehyde hydrolase">
    <location>
        <begin position="1"/>
        <end position="269"/>
    </location>
</feature>
<feature type="active site" description="Nucleophile" evidence="1">
    <location>
        <position position="9"/>
    </location>
</feature>
<feature type="active site" description="Schiff-base intermediate with substrate" evidence="1">
    <location>
        <position position="50"/>
    </location>
</feature>
<feature type="binding site" evidence="1">
    <location>
        <position position="9"/>
    </location>
    <ligand>
        <name>Mg(2+)</name>
        <dbReference type="ChEBI" id="CHEBI:18420"/>
    </ligand>
</feature>
<feature type="binding site" evidence="1">
    <location>
        <position position="11"/>
    </location>
    <ligand>
        <name>Mg(2+)</name>
        <dbReference type="ChEBI" id="CHEBI:18420"/>
    </ligand>
</feature>
<feature type="binding site" evidence="1">
    <location>
        <position position="184"/>
    </location>
    <ligand>
        <name>Mg(2+)</name>
        <dbReference type="ChEBI" id="CHEBI:18420"/>
    </ligand>
</feature>
<keyword id="KW-0378">Hydrolase</keyword>
<keyword id="KW-0460">Magnesium</keyword>
<keyword id="KW-0479">Metal-binding</keyword>
<keyword id="KW-0704">Schiff base</keyword>
<protein>
    <recommendedName>
        <fullName evidence="1">Phosphonoacetaldehyde hydrolase</fullName>
        <shortName evidence="1">Phosphonatase</shortName>
        <ecNumber evidence="1">3.11.1.1</ecNumber>
    </recommendedName>
    <alternativeName>
        <fullName evidence="1">Phosphonoacetaldehyde phosphonohydrolase</fullName>
    </alternativeName>
</protein>
<reference key="1">
    <citation type="journal article" date="2008" name="J. Bacteriol.">
        <title>Complete genome sequence of the mosquitocidal bacterium Bacillus sphaericus C3-41 and comparison with those of closely related Bacillus species.</title>
        <authorList>
            <person name="Hu X."/>
            <person name="Fan W."/>
            <person name="Han B."/>
            <person name="Liu H."/>
            <person name="Zheng D."/>
            <person name="Li Q."/>
            <person name="Dong W."/>
            <person name="Yan J."/>
            <person name="Gao M."/>
            <person name="Berry C."/>
            <person name="Yuan Z."/>
        </authorList>
    </citation>
    <scope>NUCLEOTIDE SEQUENCE [LARGE SCALE GENOMIC DNA]</scope>
    <source>
        <strain>C3-41</strain>
    </source>
</reference>